<keyword id="KW-0158">Chromosome</keyword>
<keyword id="KW-0238">DNA-binding</keyword>
<keyword id="KW-0539">Nucleus</keyword>
<keyword id="KW-1185">Reference proteome</keyword>
<keyword id="KW-0779">Telomere</keyword>
<gene>
    <name evidence="6" type="primary">STN1</name>
    <name evidence="8" type="ordered locus">At1g07130</name>
    <name evidence="9" type="ORF">F10K1.17</name>
</gene>
<accession>Q9LMK5</accession>
<reference key="1">
    <citation type="journal article" date="2000" name="Nature">
        <title>Sequence and analysis of chromosome 1 of the plant Arabidopsis thaliana.</title>
        <authorList>
            <person name="Theologis A."/>
            <person name="Ecker J.R."/>
            <person name="Palm C.J."/>
            <person name="Federspiel N.A."/>
            <person name="Kaul S."/>
            <person name="White O."/>
            <person name="Alonso J."/>
            <person name="Altafi H."/>
            <person name="Araujo R."/>
            <person name="Bowman C.L."/>
            <person name="Brooks S.Y."/>
            <person name="Buehler E."/>
            <person name="Chan A."/>
            <person name="Chao Q."/>
            <person name="Chen H."/>
            <person name="Cheuk R.F."/>
            <person name="Chin C.W."/>
            <person name="Chung M.K."/>
            <person name="Conn L."/>
            <person name="Conway A.B."/>
            <person name="Conway A.R."/>
            <person name="Creasy T.H."/>
            <person name="Dewar K."/>
            <person name="Dunn P."/>
            <person name="Etgu P."/>
            <person name="Feldblyum T.V."/>
            <person name="Feng J.-D."/>
            <person name="Fong B."/>
            <person name="Fujii C.Y."/>
            <person name="Gill J.E."/>
            <person name="Goldsmith A.D."/>
            <person name="Haas B."/>
            <person name="Hansen N.F."/>
            <person name="Hughes B."/>
            <person name="Huizar L."/>
            <person name="Hunter J.L."/>
            <person name="Jenkins J."/>
            <person name="Johnson-Hopson C."/>
            <person name="Khan S."/>
            <person name="Khaykin E."/>
            <person name="Kim C.J."/>
            <person name="Koo H.L."/>
            <person name="Kremenetskaia I."/>
            <person name="Kurtz D.B."/>
            <person name="Kwan A."/>
            <person name="Lam B."/>
            <person name="Langin-Hooper S."/>
            <person name="Lee A."/>
            <person name="Lee J.M."/>
            <person name="Lenz C.A."/>
            <person name="Li J.H."/>
            <person name="Li Y.-P."/>
            <person name="Lin X."/>
            <person name="Liu S.X."/>
            <person name="Liu Z.A."/>
            <person name="Luros J.S."/>
            <person name="Maiti R."/>
            <person name="Marziali A."/>
            <person name="Militscher J."/>
            <person name="Miranda M."/>
            <person name="Nguyen M."/>
            <person name="Nierman W.C."/>
            <person name="Osborne B.I."/>
            <person name="Pai G."/>
            <person name="Peterson J."/>
            <person name="Pham P.K."/>
            <person name="Rizzo M."/>
            <person name="Rooney T."/>
            <person name="Rowley D."/>
            <person name="Sakano H."/>
            <person name="Salzberg S.L."/>
            <person name="Schwartz J.R."/>
            <person name="Shinn P."/>
            <person name="Southwick A.M."/>
            <person name="Sun H."/>
            <person name="Tallon L.J."/>
            <person name="Tambunga G."/>
            <person name="Toriumi M.J."/>
            <person name="Town C.D."/>
            <person name="Utterback T."/>
            <person name="Van Aken S."/>
            <person name="Vaysberg M."/>
            <person name="Vysotskaia V.S."/>
            <person name="Walker M."/>
            <person name="Wu D."/>
            <person name="Yu G."/>
            <person name="Fraser C.M."/>
            <person name="Venter J.C."/>
            <person name="Davis R.W."/>
        </authorList>
    </citation>
    <scope>NUCLEOTIDE SEQUENCE [LARGE SCALE GENOMIC DNA]</scope>
    <source>
        <strain>cv. Columbia</strain>
    </source>
</reference>
<reference key="2">
    <citation type="journal article" date="2017" name="Plant J.">
        <title>Araport11: a complete reannotation of the Arabidopsis thaliana reference genome.</title>
        <authorList>
            <person name="Cheng C.Y."/>
            <person name="Krishnakumar V."/>
            <person name="Chan A.P."/>
            <person name="Thibaud-Nissen F."/>
            <person name="Schobel S."/>
            <person name="Town C.D."/>
        </authorList>
    </citation>
    <scope>GENOME REANNOTATION</scope>
    <source>
        <strain>cv. Columbia</strain>
    </source>
</reference>
<reference key="3">
    <citation type="journal article" date="2002" name="Science">
        <title>Functional annotation of a full-length Arabidopsis cDNA collection.</title>
        <authorList>
            <person name="Seki M."/>
            <person name="Narusaka M."/>
            <person name="Kamiya A."/>
            <person name="Ishida J."/>
            <person name="Satou M."/>
            <person name="Sakurai T."/>
            <person name="Nakajima M."/>
            <person name="Enju A."/>
            <person name="Akiyama K."/>
            <person name="Oono Y."/>
            <person name="Muramatsu M."/>
            <person name="Hayashizaki Y."/>
            <person name="Kawai J."/>
            <person name="Carninci P."/>
            <person name="Itoh M."/>
            <person name="Ishii Y."/>
            <person name="Arakawa T."/>
            <person name="Shibata K."/>
            <person name="Shinagawa A."/>
            <person name="Shinozaki K."/>
        </authorList>
    </citation>
    <scope>NUCLEOTIDE SEQUENCE [LARGE SCALE MRNA]</scope>
    <source>
        <strain>cv. Columbia</strain>
    </source>
</reference>
<reference key="4">
    <citation type="journal article" date="2003" name="Science">
        <title>Empirical analysis of transcriptional activity in the Arabidopsis genome.</title>
        <authorList>
            <person name="Yamada K."/>
            <person name="Lim J."/>
            <person name="Dale J.M."/>
            <person name="Chen H."/>
            <person name="Shinn P."/>
            <person name="Palm C.J."/>
            <person name="Southwick A.M."/>
            <person name="Wu H.C."/>
            <person name="Kim C.J."/>
            <person name="Nguyen M."/>
            <person name="Pham P.K."/>
            <person name="Cheuk R.F."/>
            <person name="Karlin-Newmann G."/>
            <person name="Liu S.X."/>
            <person name="Lam B."/>
            <person name="Sakano H."/>
            <person name="Wu T."/>
            <person name="Yu G."/>
            <person name="Miranda M."/>
            <person name="Quach H.L."/>
            <person name="Tripp M."/>
            <person name="Chang C.H."/>
            <person name="Lee J.M."/>
            <person name="Toriumi M.J."/>
            <person name="Chan M.M."/>
            <person name="Tang C.C."/>
            <person name="Onodera C.S."/>
            <person name="Deng J.M."/>
            <person name="Akiyama K."/>
            <person name="Ansari Y."/>
            <person name="Arakawa T."/>
            <person name="Banh J."/>
            <person name="Banno F."/>
            <person name="Bowser L."/>
            <person name="Brooks S.Y."/>
            <person name="Carninci P."/>
            <person name="Chao Q."/>
            <person name="Choy N."/>
            <person name="Enju A."/>
            <person name="Goldsmith A.D."/>
            <person name="Gurjal M."/>
            <person name="Hansen N.F."/>
            <person name="Hayashizaki Y."/>
            <person name="Johnson-Hopson C."/>
            <person name="Hsuan V.W."/>
            <person name="Iida K."/>
            <person name="Karnes M."/>
            <person name="Khan S."/>
            <person name="Koesema E."/>
            <person name="Ishida J."/>
            <person name="Jiang P.X."/>
            <person name="Jones T."/>
            <person name="Kawai J."/>
            <person name="Kamiya A."/>
            <person name="Meyers C."/>
            <person name="Nakajima M."/>
            <person name="Narusaka M."/>
            <person name="Seki M."/>
            <person name="Sakurai T."/>
            <person name="Satou M."/>
            <person name="Tamse R."/>
            <person name="Vaysberg M."/>
            <person name="Wallender E.K."/>
            <person name="Wong C."/>
            <person name="Yamamura Y."/>
            <person name="Yuan S."/>
            <person name="Shinozaki K."/>
            <person name="Davis R.W."/>
            <person name="Theologis A."/>
            <person name="Ecker J.R."/>
        </authorList>
    </citation>
    <scope>NUCLEOTIDE SEQUENCE [LARGE SCALE MRNA]</scope>
    <source>
        <strain>cv. Columbia</strain>
    </source>
</reference>
<reference key="5">
    <citation type="submission" date="2002-03" db="EMBL/GenBank/DDBJ databases">
        <title>Full-length cDNA from Arabidopsis thaliana.</title>
        <authorList>
            <person name="Brover V.V."/>
            <person name="Troukhan M.E."/>
            <person name="Alexandrov N.A."/>
            <person name="Lu Y.-P."/>
            <person name="Flavell R.B."/>
            <person name="Feldmann K.A."/>
        </authorList>
    </citation>
    <scope>NUCLEOTIDE SEQUENCE [LARGE SCALE MRNA]</scope>
</reference>
<reference key="6">
    <citation type="journal article" date="2008" name="Proc. Natl. Acad. Sci. U.S.A.">
        <title>STN1 protects chromosome ends in Arabidopsis thaliana.</title>
        <authorList>
            <person name="Song X."/>
            <person name="Leehy K."/>
            <person name="Warrington R.T."/>
            <person name="Lamb J.C."/>
            <person name="Surovtseva Y.V."/>
            <person name="Shippen D.E."/>
        </authorList>
    </citation>
    <scope>FUNCTION</scope>
    <scope>SUBCELLULAR LOCATION</scope>
    <scope>TISSUE SPECIFICITY</scope>
    <scope>DISRUPTION PHENOTYPE</scope>
</reference>
<reference key="7">
    <citation type="journal article" date="2009" name="Mol. Cell">
        <title>Conserved telomere maintenance component 1 interacts with STN1 and maintains chromosome ends in higher eukaryotes.</title>
        <authorList>
            <person name="Surovtseva Y.V."/>
            <person name="Churikov D."/>
            <person name="Boltz K.A."/>
            <person name="Song X."/>
            <person name="Lamb J.C."/>
            <person name="Warrington R."/>
            <person name="Leehy K."/>
            <person name="Heacock M."/>
            <person name="Price C.M."/>
            <person name="Shippen D.E."/>
        </authorList>
    </citation>
    <scope>INTERACTION WITH CTC1</scope>
</reference>
<reference key="8">
    <citation type="journal article" date="2013" name="Plant Cell">
        <title>MERISTEM DISORGANIZATION1 encodes TEN1, an essential telomere protein that modulates telomerase processivity in Arabidopsis.</title>
        <authorList>
            <person name="Leehy K.A."/>
            <person name="Lee J.R."/>
            <person name="Song X."/>
            <person name="Renfrew K.B."/>
            <person name="Shippen D.E."/>
        </authorList>
    </citation>
    <scope>INTERACTION WITH TEN1</scope>
</reference>
<reference key="9">
    <citation type="journal article" date="2014" name="PLoS Genet.">
        <title>Role of STN1 and DNA polymerase alpha in telomere stability and genome-wide replication in Arabidopsis.</title>
        <authorList>
            <person name="Derboven E."/>
            <person name="Ekker H."/>
            <person name="Kusenda B."/>
            <person name="Bulankova P."/>
            <person name="Riha K."/>
        </authorList>
    </citation>
    <scope>FUNCTION</scope>
    <scope>DISRUPTION PHENOTYPE</scope>
</reference>
<reference key="10">
    <citation type="journal article" date="2014" name="PLoS Genet.">
        <title>POT1a and components of CST engage telomerase and regulate its activity in Arabidopsis.</title>
        <authorList>
            <person name="Renfrew K.B."/>
            <person name="Song X."/>
            <person name="Lee J.R."/>
            <person name="Arora A."/>
            <person name="Shippen D.E."/>
        </authorList>
    </citation>
    <scope>FUNCTION</scope>
    <scope>INTERACTION WITH TEN1 AND POT1A</scope>
</reference>
<dbReference type="EMBL" id="AC067971">
    <property type="protein sequence ID" value="AAF82208.1"/>
    <property type="molecule type" value="Genomic_DNA"/>
</dbReference>
<dbReference type="EMBL" id="CP002684">
    <property type="protein sequence ID" value="AEE28079.1"/>
    <property type="molecule type" value="Genomic_DNA"/>
</dbReference>
<dbReference type="EMBL" id="AK118772">
    <property type="protein sequence ID" value="BAC43365.1"/>
    <property type="molecule type" value="mRNA"/>
</dbReference>
<dbReference type="EMBL" id="BT005022">
    <property type="protein sequence ID" value="AAO50555.1"/>
    <property type="molecule type" value="mRNA"/>
</dbReference>
<dbReference type="EMBL" id="AY086427">
    <property type="protein sequence ID" value="AAM63429.1"/>
    <property type="molecule type" value="mRNA"/>
</dbReference>
<dbReference type="PIR" id="B86206">
    <property type="entry name" value="B86206"/>
</dbReference>
<dbReference type="RefSeq" id="NP_563781.1">
    <property type="nucleotide sequence ID" value="NM_100586.2"/>
</dbReference>
<dbReference type="SMR" id="Q9LMK5"/>
<dbReference type="BioGRID" id="22464">
    <property type="interactions" value="3"/>
</dbReference>
<dbReference type="FunCoup" id="Q9LMK5">
    <property type="interactions" value="15"/>
</dbReference>
<dbReference type="STRING" id="3702.Q9LMK5"/>
<dbReference type="PaxDb" id="3702-AT1G07130.1"/>
<dbReference type="EnsemblPlants" id="AT1G07130.1">
    <property type="protein sequence ID" value="AT1G07130.1"/>
    <property type="gene ID" value="AT1G07130"/>
</dbReference>
<dbReference type="GeneID" id="837223"/>
<dbReference type="Gramene" id="AT1G07130.1">
    <property type="protein sequence ID" value="AT1G07130.1"/>
    <property type="gene ID" value="AT1G07130"/>
</dbReference>
<dbReference type="KEGG" id="ath:AT1G07130"/>
<dbReference type="Araport" id="AT1G07130"/>
<dbReference type="TAIR" id="AT1G07130">
    <property type="gene designation" value="STN1"/>
</dbReference>
<dbReference type="eggNOG" id="KOG3108">
    <property type="taxonomic scope" value="Eukaryota"/>
</dbReference>
<dbReference type="HOGENOM" id="CLU_111357_0_0_1"/>
<dbReference type="InParanoid" id="Q9LMK5"/>
<dbReference type="OMA" id="ECYDLPP"/>
<dbReference type="OrthoDB" id="77828at2759"/>
<dbReference type="PhylomeDB" id="Q9LMK5"/>
<dbReference type="PRO" id="PR:Q9LMK5"/>
<dbReference type="Proteomes" id="UP000006548">
    <property type="component" value="Chromosome 1"/>
</dbReference>
<dbReference type="GO" id="GO:0000781">
    <property type="term" value="C:chromosome, telomeric region"/>
    <property type="evidence" value="ECO:0000314"/>
    <property type="project" value="TAIR"/>
</dbReference>
<dbReference type="GO" id="GO:0005634">
    <property type="term" value="C:nucleus"/>
    <property type="evidence" value="ECO:0007669"/>
    <property type="project" value="UniProtKB-SubCell"/>
</dbReference>
<dbReference type="GO" id="GO:0003677">
    <property type="term" value="F:DNA binding"/>
    <property type="evidence" value="ECO:0007669"/>
    <property type="project" value="UniProtKB-KW"/>
</dbReference>
<dbReference type="GO" id="GO:0016233">
    <property type="term" value="P:telomere capping"/>
    <property type="evidence" value="ECO:0000315"/>
    <property type="project" value="TAIR"/>
</dbReference>
<dbReference type="CDD" id="cd04483">
    <property type="entry name" value="hOBFC1_like"/>
    <property type="match status" value="1"/>
</dbReference>
<dbReference type="FunFam" id="2.40.50.140:FF:000352">
    <property type="entry name" value="CST complex subunit STN1"/>
    <property type="match status" value="1"/>
</dbReference>
<dbReference type="Gene3D" id="2.40.50.140">
    <property type="entry name" value="Nucleic acid-binding proteins"/>
    <property type="match status" value="1"/>
</dbReference>
<dbReference type="InterPro" id="IPR012340">
    <property type="entry name" value="NA-bd_OB-fold"/>
</dbReference>
<dbReference type="InterPro" id="IPR004365">
    <property type="entry name" value="NA-bd_OB_tRNA"/>
</dbReference>
<dbReference type="InterPro" id="IPR040260">
    <property type="entry name" value="RFA2-like"/>
</dbReference>
<dbReference type="PANTHER" id="PTHR13989:SF33">
    <property type="entry name" value="CST COMPLEX SUBUNIT STN1"/>
    <property type="match status" value="1"/>
</dbReference>
<dbReference type="PANTHER" id="PTHR13989">
    <property type="entry name" value="REPLICATION PROTEIN A-RELATED"/>
    <property type="match status" value="1"/>
</dbReference>
<dbReference type="Pfam" id="PF01336">
    <property type="entry name" value="tRNA_anti-codon"/>
    <property type="match status" value="1"/>
</dbReference>
<dbReference type="SUPFAM" id="SSF50249">
    <property type="entry name" value="Nucleic acid-binding proteins"/>
    <property type="match status" value="1"/>
</dbReference>
<proteinExistence type="evidence at protein level"/>
<feature type="chain" id="PRO_0000392992" description="CST complex subunit STN1">
    <location>
        <begin position="1"/>
        <end position="160"/>
    </location>
</feature>
<feature type="DNA-binding region" description="OB">
    <location>
        <begin position="41"/>
        <end position="133"/>
    </location>
</feature>
<sequence>MDRSLQSTHAKLVARDIQRLTQSPTESNSFSLLGGACVSRVEIVGTIVSRDLTPKFLKFGVDDGTGCVTCVMWLNQLTSSYFSRWDPATILLLASAARKQAAQIRIGAVARVRGRVGSYRGVMQITANVAVAERDPNAEILHWLECLKLGQSCYRVRIQS</sequence>
<comment type="function">
    <text evidence="1 4 5">Component of the CST complex, a complex that binds to single-stranded DNA and is required to protect telomeres from DNA degradation. The CST complex binds single-stranded DNA with high affinity in a sequence-independent manner, while isolated subunits bind DNA with low affinity by themselves (PubMed:19064932). Associates with enzymatically active telomerase (PubMed:25329641). Plays a genomewide role in DNA replication and facilitates re-replication at non-telomeric loci (PubMed:25299252).</text>
</comment>
<comment type="subunit">
    <text evidence="2 3 5">Component of the CST complex, composed of CTC1, TEN1 and STN1. Interacts with CTC1 (PubMed:19854131). Interacts with TEN1 (PubMed:23572541, PubMed:25329641). Interacts with POT1A (PubMed:25329641). In vitro interaction with TEN1 and POT1A is mutually exclusive, indicating that POT1A and TEN1 may compete for the same binding site (PubMed:25329641).</text>
</comment>
<comment type="subcellular location">
    <subcellularLocation>
        <location evidence="1">Nucleus</location>
    </subcellularLocation>
    <subcellularLocation>
        <location evidence="1">Chromosome</location>
        <location evidence="1">Telomere</location>
    </subcellularLocation>
</comment>
<comment type="tissue specificity">
    <text evidence="1">Widely expressed.</text>
</comment>
<comment type="disruption phenotype">
    <text evidence="1 4">Plants display an immediate onset of growth and developmental defects and reduced fertility, probably due to impaired telomeres (PubMed:19064932). In nearly all mutants, apical dominance is completely abolished, leading to multiple inflorescence bolts that are often fused (PubMed:19064932). In addition, floral phyllotaxy is perturbed and siliques develop at irregular positions on the inflorescence bolt (PubMed:19064932). Moreover, leaf size is substantially reduced, likely reflecting defects in cell proliferation (PubMed:19064932). These effects are accompanied by catastrophic loss of telomeric and subtelomeric DNA, high levels of end-to-end chromosome fusions, increased G-overhang signals, and elevated telomere recombination (PubMed:19064932). Progressive loss of telomeric DNA and gradual onset of telomere dysfunction (PubMed:25299252). Hindered re-replication of heterochromatic regions (PubMed:25299252).</text>
</comment>
<comment type="similarity">
    <text evidence="7">Belongs to the STN1 family.</text>
</comment>
<name>STN1_ARATH</name>
<evidence type="ECO:0000269" key="1">
    <source>
    </source>
</evidence>
<evidence type="ECO:0000269" key="2">
    <source>
    </source>
</evidence>
<evidence type="ECO:0000269" key="3">
    <source>
    </source>
</evidence>
<evidence type="ECO:0000269" key="4">
    <source>
    </source>
</evidence>
<evidence type="ECO:0000269" key="5">
    <source>
    </source>
</evidence>
<evidence type="ECO:0000303" key="6">
    <source>
    </source>
</evidence>
<evidence type="ECO:0000305" key="7"/>
<evidence type="ECO:0000312" key="8">
    <source>
        <dbReference type="Araport" id="AT1G07130"/>
    </source>
</evidence>
<evidence type="ECO:0000312" key="9">
    <source>
        <dbReference type="EMBL" id="AAF82208.1"/>
    </source>
</evidence>
<protein>
    <recommendedName>
        <fullName evidence="6">CST complex subunit STN1</fullName>
    </recommendedName>
    <alternativeName>
        <fullName evidence="6">Suppressor of cdc thirteen homolog</fullName>
        <shortName evidence="6">AtSTN1</shortName>
    </alternativeName>
</protein>
<organism>
    <name type="scientific">Arabidopsis thaliana</name>
    <name type="common">Mouse-ear cress</name>
    <dbReference type="NCBI Taxonomy" id="3702"/>
    <lineage>
        <taxon>Eukaryota</taxon>
        <taxon>Viridiplantae</taxon>
        <taxon>Streptophyta</taxon>
        <taxon>Embryophyta</taxon>
        <taxon>Tracheophyta</taxon>
        <taxon>Spermatophyta</taxon>
        <taxon>Magnoliopsida</taxon>
        <taxon>eudicotyledons</taxon>
        <taxon>Gunneridae</taxon>
        <taxon>Pentapetalae</taxon>
        <taxon>rosids</taxon>
        <taxon>malvids</taxon>
        <taxon>Brassicales</taxon>
        <taxon>Brassicaceae</taxon>
        <taxon>Camelineae</taxon>
        <taxon>Arabidopsis</taxon>
    </lineage>
</organism>